<reference key="1">
    <citation type="journal article" date="2009" name="PLoS Genet.">
        <title>Organised genome dynamics in the Escherichia coli species results in highly diverse adaptive paths.</title>
        <authorList>
            <person name="Touchon M."/>
            <person name="Hoede C."/>
            <person name="Tenaillon O."/>
            <person name="Barbe V."/>
            <person name="Baeriswyl S."/>
            <person name="Bidet P."/>
            <person name="Bingen E."/>
            <person name="Bonacorsi S."/>
            <person name="Bouchier C."/>
            <person name="Bouvet O."/>
            <person name="Calteau A."/>
            <person name="Chiapello H."/>
            <person name="Clermont O."/>
            <person name="Cruveiller S."/>
            <person name="Danchin A."/>
            <person name="Diard M."/>
            <person name="Dossat C."/>
            <person name="Karoui M.E."/>
            <person name="Frapy E."/>
            <person name="Garry L."/>
            <person name="Ghigo J.M."/>
            <person name="Gilles A.M."/>
            <person name="Johnson J."/>
            <person name="Le Bouguenec C."/>
            <person name="Lescat M."/>
            <person name="Mangenot S."/>
            <person name="Martinez-Jehanne V."/>
            <person name="Matic I."/>
            <person name="Nassif X."/>
            <person name="Oztas S."/>
            <person name="Petit M.A."/>
            <person name="Pichon C."/>
            <person name="Rouy Z."/>
            <person name="Ruf C.S."/>
            <person name="Schneider D."/>
            <person name="Tourret J."/>
            <person name="Vacherie B."/>
            <person name="Vallenet D."/>
            <person name="Medigue C."/>
            <person name="Rocha E.P.C."/>
            <person name="Denamur E."/>
        </authorList>
    </citation>
    <scope>NUCLEOTIDE SEQUENCE [LARGE SCALE GENOMIC DNA]</scope>
    <source>
        <strain>ED1a</strain>
    </source>
</reference>
<proteinExistence type="inferred from homology"/>
<feature type="chain" id="PRO_1000198989" description="Aspartate--tRNA ligase">
    <location>
        <begin position="1"/>
        <end position="590"/>
    </location>
</feature>
<feature type="region of interest" description="Aspartate" evidence="1">
    <location>
        <begin position="195"/>
        <end position="198"/>
    </location>
</feature>
<feature type="binding site" evidence="1">
    <location>
        <position position="171"/>
    </location>
    <ligand>
        <name>L-aspartate</name>
        <dbReference type="ChEBI" id="CHEBI:29991"/>
    </ligand>
</feature>
<feature type="binding site" evidence="1">
    <location>
        <begin position="217"/>
        <end position="219"/>
    </location>
    <ligand>
        <name>ATP</name>
        <dbReference type="ChEBI" id="CHEBI:30616"/>
    </ligand>
</feature>
<feature type="binding site" evidence="1">
    <location>
        <position position="217"/>
    </location>
    <ligand>
        <name>L-aspartate</name>
        <dbReference type="ChEBI" id="CHEBI:29991"/>
    </ligand>
</feature>
<feature type="binding site" evidence="1">
    <location>
        <position position="226"/>
    </location>
    <ligand>
        <name>ATP</name>
        <dbReference type="ChEBI" id="CHEBI:30616"/>
    </ligand>
</feature>
<feature type="binding site" evidence="1">
    <location>
        <position position="448"/>
    </location>
    <ligand>
        <name>L-aspartate</name>
        <dbReference type="ChEBI" id="CHEBI:29991"/>
    </ligand>
</feature>
<feature type="binding site" evidence="1">
    <location>
        <position position="482"/>
    </location>
    <ligand>
        <name>ATP</name>
        <dbReference type="ChEBI" id="CHEBI:30616"/>
    </ligand>
</feature>
<feature type="binding site" evidence="1">
    <location>
        <position position="489"/>
    </location>
    <ligand>
        <name>L-aspartate</name>
        <dbReference type="ChEBI" id="CHEBI:29991"/>
    </ligand>
</feature>
<feature type="binding site" evidence="1">
    <location>
        <begin position="534"/>
        <end position="537"/>
    </location>
    <ligand>
        <name>ATP</name>
        <dbReference type="ChEBI" id="CHEBI:30616"/>
    </ligand>
</feature>
<gene>
    <name evidence="1" type="primary">aspS</name>
    <name type="ordered locus">ECED1_2071</name>
</gene>
<evidence type="ECO:0000255" key="1">
    <source>
        <dbReference type="HAMAP-Rule" id="MF_00044"/>
    </source>
</evidence>
<organism>
    <name type="scientific">Escherichia coli O81 (strain ED1a)</name>
    <dbReference type="NCBI Taxonomy" id="585397"/>
    <lineage>
        <taxon>Bacteria</taxon>
        <taxon>Pseudomonadati</taxon>
        <taxon>Pseudomonadota</taxon>
        <taxon>Gammaproteobacteria</taxon>
        <taxon>Enterobacterales</taxon>
        <taxon>Enterobacteriaceae</taxon>
        <taxon>Escherichia</taxon>
    </lineage>
</organism>
<name>SYD_ECO81</name>
<protein>
    <recommendedName>
        <fullName evidence="1">Aspartate--tRNA ligase</fullName>
        <ecNumber evidence="1">6.1.1.12</ecNumber>
    </recommendedName>
    <alternativeName>
        <fullName evidence="1">Aspartyl-tRNA synthetase</fullName>
        <shortName evidence="1">AspRS</shortName>
    </alternativeName>
</protein>
<sequence>MRTEYCGQLRLSHVGQQVTLCGWVNRRRDLGSLIFIDMRDREGIVQVFFDPDRADALKLASELRNEFCIQVTGTVRARDEKNINRDMATGEIEVLASSLTIINRADVLPLDSNHVNTEEARLKYRYLDLRRPEMAQRLKTRAKITSLVRRFMDDHGFLDIETPMLTKATPEGARDYLVPSRVHKGKFYALPQSPQLFKQLLMMSGFDRYYQIVKCFRDEDLRADRQPEFTQIDVETSFMTAPQVREVMEALVRHLWLEVKGVDLGDFPVMTFAEAERRYGSDKPDLRNPMELTDVADLLKSVEFAVFAGPANDPKGRVAALRVPGGASLTRKQIDEYGNFVKIYGAKGLAYIKVNERAKGLEGINSPVAKFLNAEIIEAILERTGAQDGDMIFFGADNKKIVADAMGALRLKVGKDLGLTDESKWAPLWVIDFPMFEDDGEGGLTAMHHPFTSPKDMTAAELKAAPENAVANAYDMVINGYEVGGGSVRIHNGDMQQTVFGILGINEEEQREKFGFLLDALKYGTPPHAGLAFGLDRLTMLLTGTDNIRDVIAFPKTTAAACLMTEAPSFANPTALAELSIQVVKKAENN</sequence>
<dbReference type="EC" id="6.1.1.12" evidence="1"/>
<dbReference type="EMBL" id="CU928162">
    <property type="protein sequence ID" value="CAR08263.2"/>
    <property type="molecule type" value="Genomic_DNA"/>
</dbReference>
<dbReference type="RefSeq" id="WP_001258675.1">
    <property type="nucleotide sequence ID" value="NC_011745.1"/>
</dbReference>
<dbReference type="SMR" id="B7MVZ7"/>
<dbReference type="KEGG" id="ecq:ECED1_2071"/>
<dbReference type="HOGENOM" id="CLU_014330_3_2_6"/>
<dbReference type="Proteomes" id="UP000000748">
    <property type="component" value="Chromosome"/>
</dbReference>
<dbReference type="GO" id="GO:0005737">
    <property type="term" value="C:cytoplasm"/>
    <property type="evidence" value="ECO:0007669"/>
    <property type="project" value="UniProtKB-SubCell"/>
</dbReference>
<dbReference type="GO" id="GO:0004815">
    <property type="term" value="F:aspartate-tRNA ligase activity"/>
    <property type="evidence" value="ECO:0007669"/>
    <property type="project" value="UniProtKB-UniRule"/>
</dbReference>
<dbReference type="GO" id="GO:0005524">
    <property type="term" value="F:ATP binding"/>
    <property type="evidence" value="ECO:0007669"/>
    <property type="project" value="UniProtKB-UniRule"/>
</dbReference>
<dbReference type="GO" id="GO:0003676">
    <property type="term" value="F:nucleic acid binding"/>
    <property type="evidence" value="ECO:0007669"/>
    <property type="project" value="InterPro"/>
</dbReference>
<dbReference type="GO" id="GO:0006422">
    <property type="term" value="P:aspartyl-tRNA aminoacylation"/>
    <property type="evidence" value="ECO:0007669"/>
    <property type="project" value="UniProtKB-UniRule"/>
</dbReference>
<dbReference type="CDD" id="cd00777">
    <property type="entry name" value="AspRS_core"/>
    <property type="match status" value="1"/>
</dbReference>
<dbReference type="CDD" id="cd04317">
    <property type="entry name" value="EcAspRS_like_N"/>
    <property type="match status" value="1"/>
</dbReference>
<dbReference type="FunFam" id="2.40.50.140:FF:000080">
    <property type="entry name" value="Aspartate--tRNA ligase"/>
    <property type="match status" value="1"/>
</dbReference>
<dbReference type="FunFam" id="3.30.1360.30:FF:000001">
    <property type="entry name" value="Aspartate--tRNA ligase"/>
    <property type="match status" value="1"/>
</dbReference>
<dbReference type="Gene3D" id="3.30.930.10">
    <property type="entry name" value="Bira Bifunctional Protein, Domain 2"/>
    <property type="match status" value="1"/>
</dbReference>
<dbReference type="Gene3D" id="3.30.1360.30">
    <property type="entry name" value="GAD-like domain"/>
    <property type="match status" value="1"/>
</dbReference>
<dbReference type="Gene3D" id="2.40.50.140">
    <property type="entry name" value="Nucleic acid-binding proteins"/>
    <property type="match status" value="1"/>
</dbReference>
<dbReference type="HAMAP" id="MF_00044">
    <property type="entry name" value="Asp_tRNA_synth_type1"/>
    <property type="match status" value="1"/>
</dbReference>
<dbReference type="InterPro" id="IPR004364">
    <property type="entry name" value="Aa-tRNA-synt_II"/>
</dbReference>
<dbReference type="InterPro" id="IPR006195">
    <property type="entry name" value="aa-tRNA-synth_II"/>
</dbReference>
<dbReference type="InterPro" id="IPR045864">
    <property type="entry name" value="aa-tRNA-synth_II/BPL/LPL"/>
</dbReference>
<dbReference type="InterPro" id="IPR004524">
    <property type="entry name" value="Asp-tRNA-ligase_1"/>
</dbReference>
<dbReference type="InterPro" id="IPR047089">
    <property type="entry name" value="Asp-tRNA-ligase_1_N"/>
</dbReference>
<dbReference type="InterPro" id="IPR002312">
    <property type="entry name" value="Asp/Asn-tRNA-synth_IIb"/>
</dbReference>
<dbReference type="InterPro" id="IPR047090">
    <property type="entry name" value="AspRS_core"/>
</dbReference>
<dbReference type="InterPro" id="IPR004115">
    <property type="entry name" value="GAD-like_sf"/>
</dbReference>
<dbReference type="InterPro" id="IPR029351">
    <property type="entry name" value="GAD_dom"/>
</dbReference>
<dbReference type="InterPro" id="IPR012340">
    <property type="entry name" value="NA-bd_OB-fold"/>
</dbReference>
<dbReference type="InterPro" id="IPR004365">
    <property type="entry name" value="NA-bd_OB_tRNA"/>
</dbReference>
<dbReference type="NCBIfam" id="TIGR00459">
    <property type="entry name" value="aspS_bact"/>
    <property type="match status" value="1"/>
</dbReference>
<dbReference type="NCBIfam" id="NF001750">
    <property type="entry name" value="PRK00476.1"/>
    <property type="match status" value="1"/>
</dbReference>
<dbReference type="PANTHER" id="PTHR22594:SF5">
    <property type="entry name" value="ASPARTATE--TRNA LIGASE, MITOCHONDRIAL"/>
    <property type="match status" value="1"/>
</dbReference>
<dbReference type="PANTHER" id="PTHR22594">
    <property type="entry name" value="ASPARTYL/LYSYL-TRNA SYNTHETASE"/>
    <property type="match status" value="1"/>
</dbReference>
<dbReference type="Pfam" id="PF02938">
    <property type="entry name" value="GAD"/>
    <property type="match status" value="1"/>
</dbReference>
<dbReference type="Pfam" id="PF00152">
    <property type="entry name" value="tRNA-synt_2"/>
    <property type="match status" value="1"/>
</dbReference>
<dbReference type="Pfam" id="PF01336">
    <property type="entry name" value="tRNA_anti-codon"/>
    <property type="match status" value="1"/>
</dbReference>
<dbReference type="PRINTS" id="PR01042">
    <property type="entry name" value="TRNASYNTHASP"/>
</dbReference>
<dbReference type="SUPFAM" id="SSF55681">
    <property type="entry name" value="Class II aaRS and biotin synthetases"/>
    <property type="match status" value="1"/>
</dbReference>
<dbReference type="SUPFAM" id="SSF55261">
    <property type="entry name" value="GAD domain-like"/>
    <property type="match status" value="1"/>
</dbReference>
<dbReference type="SUPFAM" id="SSF50249">
    <property type="entry name" value="Nucleic acid-binding proteins"/>
    <property type="match status" value="1"/>
</dbReference>
<dbReference type="PROSITE" id="PS50862">
    <property type="entry name" value="AA_TRNA_LIGASE_II"/>
    <property type="match status" value="1"/>
</dbReference>
<accession>B7MVZ7</accession>
<comment type="function">
    <text evidence="1">Catalyzes the attachment of L-aspartate to tRNA(Asp) in a two-step reaction: L-aspartate is first activated by ATP to form Asp-AMP and then transferred to the acceptor end of tRNA(Asp).</text>
</comment>
<comment type="catalytic activity">
    <reaction evidence="1">
        <text>tRNA(Asp) + L-aspartate + ATP = L-aspartyl-tRNA(Asp) + AMP + diphosphate</text>
        <dbReference type="Rhea" id="RHEA:19649"/>
        <dbReference type="Rhea" id="RHEA-COMP:9660"/>
        <dbReference type="Rhea" id="RHEA-COMP:9678"/>
        <dbReference type="ChEBI" id="CHEBI:29991"/>
        <dbReference type="ChEBI" id="CHEBI:30616"/>
        <dbReference type="ChEBI" id="CHEBI:33019"/>
        <dbReference type="ChEBI" id="CHEBI:78442"/>
        <dbReference type="ChEBI" id="CHEBI:78516"/>
        <dbReference type="ChEBI" id="CHEBI:456215"/>
        <dbReference type="EC" id="6.1.1.12"/>
    </reaction>
</comment>
<comment type="subunit">
    <text evidence="1">Homodimer.</text>
</comment>
<comment type="subcellular location">
    <subcellularLocation>
        <location evidence="1">Cytoplasm</location>
    </subcellularLocation>
</comment>
<comment type="similarity">
    <text evidence="1">Belongs to the class-II aminoacyl-tRNA synthetase family. Type 1 subfamily.</text>
</comment>
<keyword id="KW-0030">Aminoacyl-tRNA synthetase</keyword>
<keyword id="KW-0067">ATP-binding</keyword>
<keyword id="KW-0963">Cytoplasm</keyword>
<keyword id="KW-0436">Ligase</keyword>
<keyword id="KW-0547">Nucleotide-binding</keyword>
<keyword id="KW-0648">Protein biosynthesis</keyword>